<dbReference type="EC" id="6.1.1.20" evidence="1"/>
<dbReference type="EMBL" id="AM260479">
    <property type="protein sequence ID" value="CAJ92482.1"/>
    <property type="molecule type" value="Genomic_DNA"/>
</dbReference>
<dbReference type="RefSeq" id="WP_010813101.1">
    <property type="nucleotide sequence ID" value="NZ_CP039287.1"/>
</dbReference>
<dbReference type="SMR" id="Q0KBY9"/>
<dbReference type="STRING" id="381666.H16_A1343"/>
<dbReference type="KEGG" id="reh:H16_A1343"/>
<dbReference type="eggNOG" id="COG0016">
    <property type="taxonomic scope" value="Bacteria"/>
</dbReference>
<dbReference type="HOGENOM" id="CLU_025086_0_1_4"/>
<dbReference type="OrthoDB" id="9800719at2"/>
<dbReference type="Proteomes" id="UP000008210">
    <property type="component" value="Chromosome 1"/>
</dbReference>
<dbReference type="GO" id="GO:0005737">
    <property type="term" value="C:cytoplasm"/>
    <property type="evidence" value="ECO:0007669"/>
    <property type="project" value="UniProtKB-SubCell"/>
</dbReference>
<dbReference type="GO" id="GO:0005524">
    <property type="term" value="F:ATP binding"/>
    <property type="evidence" value="ECO:0007669"/>
    <property type="project" value="UniProtKB-UniRule"/>
</dbReference>
<dbReference type="GO" id="GO:0000287">
    <property type="term" value="F:magnesium ion binding"/>
    <property type="evidence" value="ECO:0007669"/>
    <property type="project" value="UniProtKB-UniRule"/>
</dbReference>
<dbReference type="GO" id="GO:0004826">
    <property type="term" value="F:phenylalanine-tRNA ligase activity"/>
    <property type="evidence" value="ECO:0007669"/>
    <property type="project" value="UniProtKB-UniRule"/>
</dbReference>
<dbReference type="GO" id="GO:0000049">
    <property type="term" value="F:tRNA binding"/>
    <property type="evidence" value="ECO:0007669"/>
    <property type="project" value="InterPro"/>
</dbReference>
<dbReference type="GO" id="GO:0006432">
    <property type="term" value="P:phenylalanyl-tRNA aminoacylation"/>
    <property type="evidence" value="ECO:0007669"/>
    <property type="project" value="UniProtKB-UniRule"/>
</dbReference>
<dbReference type="CDD" id="cd00496">
    <property type="entry name" value="PheRS_alpha_core"/>
    <property type="match status" value="1"/>
</dbReference>
<dbReference type="FunFam" id="3.30.930.10:FF:000003">
    <property type="entry name" value="Phenylalanine--tRNA ligase alpha subunit"/>
    <property type="match status" value="1"/>
</dbReference>
<dbReference type="Gene3D" id="3.30.930.10">
    <property type="entry name" value="Bira Bifunctional Protein, Domain 2"/>
    <property type="match status" value="1"/>
</dbReference>
<dbReference type="HAMAP" id="MF_00281">
    <property type="entry name" value="Phe_tRNA_synth_alpha1"/>
    <property type="match status" value="1"/>
</dbReference>
<dbReference type="InterPro" id="IPR006195">
    <property type="entry name" value="aa-tRNA-synth_II"/>
</dbReference>
<dbReference type="InterPro" id="IPR045864">
    <property type="entry name" value="aa-tRNA-synth_II/BPL/LPL"/>
</dbReference>
<dbReference type="InterPro" id="IPR004529">
    <property type="entry name" value="Phe-tRNA-synth_IIc_asu"/>
</dbReference>
<dbReference type="InterPro" id="IPR004188">
    <property type="entry name" value="Phe-tRNA_ligase_II_N"/>
</dbReference>
<dbReference type="InterPro" id="IPR022911">
    <property type="entry name" value="Phe_tRNA_ligase_alpha1_bac"/>
</dbReference>
<dbReference type="InterPro" id="IPR002319">
    <property type="entry name" value="Phenylalanyl-tRNA_Synthase"/>
</dbReference>
<dbReference type="InterPro" id="IPR010978">
    <property type="entry name" value="tRNA-bd_arm"/>
</dbReference>
<dbReference type="NCBIfam" id="TIGR00468">
    <property type="entry name" value="pheS"/>
    <property type="match status" value="1"/>
</dbReference>
<dbReference type="PANTHER" id="PTHR11538:SF41">
    <property type="entry name" value="PHENYLALANINE--TRNA LIGASE, MITOCHONDRIAL"/>
    <property type="match status" value="1"/>
</dbReference>
<dbReference type="PANTHER" id="PTHR11538">
    <property type="entry name" value="PHENYLALANYL-TRNA SYNTHETASE"/>
    <property type="match status" value="1"/>
</dbReference>
<dbReference type="Pfam" id="PF02912">
    <property type="entry name" value="Phe_tRNA-synt_N"/>
    <property type="match status" value="1"/>
</dbReference>
<dbReference type="Pfam" id="PF01409">
    <property type="entry name" value="tRNA-synt_2d"/>
    <property type="match status" value="1"/>
</dbReference>
<dbReference type="SUPFAM" id="SSF55681">
    <property type="entry name" value="Class II aaRS and biotin synthetases"/>
    <property type="match status" value="1"/>
</dbReference>
<dbReference type="SUPFAM" id="SSF46589">
    <property type="entry name" value="tRNA-binding arm"/>
    <property type="match status" value="1"/>
</dbReference>
<dbReference type="PROSITE" id="PS50862">
    <property type="entry name" value="AA_TRNA_LIGASE_II"/>
    <property type="match status" value="1"/>
</dbReference>
<evidence type="ECO:0000255" key="1">
    <source>
        <dbReference type="HAMAP-Rule" id="MF_00281"/>
    </source>
</evidence>
<name>SYFA_CUPNH</name>
<reference key="1">
    <citation type="journal article" date="2006" name="Nat. Biotechnol.">
        <title>Genome sequence of the bioplastic-producing 'Knallgas' bacterium Ralstonia eutropha H16.</title>
        <authorList>
            <person name="Pohlmann A."/>
            <person name="Fricke W.F."/>
            <person name="Reinecke F."/>
            <person name="Kusian B."/>
            <person name="Liesegang H."/>
            <person name="Cramm R."/>
            <person name="Eitinger T."/>
            <person name="Ewering C."/>
            <person name="Poetter M."/>
            <person name="Schwartz E."/>
            <person name="Strittmatter A."/>
            <person name="Voss I."/>
            <person name="Gottschalk G."/>
            <person name="Steinbuechel A."/>
            <person name="Friedrich B."/>
            <person name="Bowien B."/>
        </authorList>
    </citation>
    <scope>NUCLEOTIDE SEQUENCE [LARGE SCALE GENOMIC DNA]</scope>
    <source>
        <strain>ATCC 17699 / DSM 428 / KCTC 22496 / NCIMB 10442 / H16 / Stanier 337</strain>
    </source>
</reference>
<sequence>MSQDLDQIVADAQAAFAAANDNATLENEKARFLGKTGALTELLKGLGKLDPETRKTEGARINQIKQQVEAALQARRQALADALMNARLAAEAIDVTLPGRAVSRGSLHPVMRTWERVEQIFGSIGFDVADGPEIETDWMNFTALNNPDNHPARSMQDTFYVDGRDSEDKLLLLRTHTSPMQVRYAKMHVEKYAGKAMPPIKVICPGRTYRVDSDATHSPMFNQVEGLWIGEDVSFADLKGVYTDFLRKFFERDDIQVRFRPSYFPFTEPSAEIDMAFGNGKWLEISGSGQVHPNVLRNMGLDPERYIGFAFGSGLERLTMLRYGINDLRLFFEGDVRFLRQFA</sequence>
<gene>
    <name evidence="1" type="primary">pheS</name>
    <name type="ordered locus">H16_A1343</name>
</gene>
<keyword id="KW-0030">Aminoacyl-tRNA synthetase</keyword>
<keyword id="KW-0067">ATP-binding</keyword>
<keyword id="KW-0963">Cytoplasm</keyword>
<keyword id="KW-0436">Ligase</keyword>
<keyword id="KW-0460">Magnesium</keyword>
<keyword id="KW-0479">Metal-binding</keyword>
<keyword id="KW-0547">Nucleotide-binding</keyword>
<keyword id="KW-0648">Protein biosynthesis</keyword>
<keyword id="KW-1185">Reference proteome</keyword>
<accession>Q0KBY9</accession>
<protein>
    <recommendedName>
        <fullName evidence="1">Phenylalanine--tRNA ligase alpha subunit</fullName>
        <ecNumber evidence="1">6.1.1.20</ecNumber>
    </recommendedName>
    <alternativeName>
        <fullName evidence="1">Phenylalanyl-tRNA synthetase alpha subunit</fullName>
        <shortName evidence="1">PheRS</shortName>
    </alternativeName>
</protein>
<proteinExistence type="inferred from homology"/>
<organism>
    <name type="scientific">Cupriavidus necator (strain ATCC 17699 / DSM 428 / KCTC 22496 / NCIMB 10442 / H16 / Stanier 337)</name>
    <name type="common">Ralstonia eutropha</name>
    <dbReference type="NCBI Taxonomy" id="381666"/>
    <lineage>
        <taxon>Bacteria</taxon>
        <taxon>Pseudomonadati</taxon>
        <taxon>Pseudomonadota</taxon>
        <taxon>Betaproteobacteria</taxon>
        <taxon>Burkholderiales</taxon>
        <taxon>Burkholderiaceae</taxon>
        <taxon>Cupriavidus</taxon>
    </lineage>
</organism>
<feature type="chain" id="PRO_1000006878" description="Phenylalanine--tRNA ligase alpha subunit">
    <location>
        <begin position="1"/>
        <end position="343"/>
    </location>
</feature>
<feature type="binding site" evidence="1">
    <location>
        <position position="268"/>
    </location>
    <ligand>
        <name>Mg(2+)</name>
        <dbReference type="ChEBI" id="CHEBI:18420"/>
        <note>shared with beta subunit</note>
    </ligand>
</feature>
<comment type="catalytic activity">
    <reaction evidence="1">
        <text>tRNA(Phe) + L-phenylalanine + ATP = L-phenylalanyl-tRNA(Phe) + AMP + diphosphate + H(+)</text>
        <dbReference type="Rhea" id="RHEA:19413"/>
        <dbReference type="Rhea" id="RHEA-COMP:9668"/>
        <dbReference type="Rhea" id="RHEA-COMP:9699"/>
        <dbReference type="ChEBI" id="CHEBI:15378"/>
        <dbReference type="ChEBI" id="CHEBI:30616"/>
        <dbReference type="ChEBI" id="CHEBI:33019"/>
        <dbReference type="ChEBI" id="CHEBI:58095"/>
        <dbReference type="ChEBI" id="CHEBI:78442"/>
        <dbReference type="ChEBI" id="CHEBI:78531"/>
        <dbReference type="ChEBI" id="CHEBI:456215"/>
        <dbReference type="EC" id="6.1.1.20"/>
    </reaction>
</comment>
<comment type="cofactor">
    <cofactor evidence="1">
        <name>Mg(2+)</name>
        <dbReference type="ChEBI" id="CHEBI:18420"/>
    </cofactor>
    <text evidence="1">Binds 2 magnesium ions per tetramer.</text>
</comment>
<comment type="subunit">
    <text evidence="1">Tetramer of two alpha and two beta subunits.</text>
</comment>
<comment type="subcellular location">
    <subcellularLocation>
        <location evidence="1">Cytoplasm</location>
    </subcellularLocation>
</comment>
<comment type="similarity">
    <text evidence="1">Belongs to the class-II aminoacyl-tRNA synthetase family. Phe-tRNA synthetase alpha subunit type 1 subfamily.</text>
</comment>